<accession>Q8E644</accession>
<reference key="1">
    <citation type="journal article" date="2002" name="Mol. Microbiol.">
        <title>Genome sequence of Streptococcus agalactiae, a pathogen causing invasive neonatal disease.</title>
        <authorList>
            <person name="Glaser P."/>
            <person name="Rusniok C."/>
            <person name="Buchrieser C."/>
            <person name="Chevalier F."/>
            <person name="Frangeul L."/>
            <person name="Msadek T."/>
            <person name="Zouine M."/>
            <person name="Couve E."/>
            <person name="Lalioui L."/>
            <person name="Poyart C."/>
            <person name="Trieu-Cuot P."/>
            <person name="Kunst F."/>
        </authorList>
    </citation>
    <scope>NUCLEOTIDE SEQUENCE [LARGE SCALE GENOMIC DNA]</scope>
    <source>
        <strain>NEM316</strain>
    </source>
</reference>
<feature type="chain" id="PRO_0000090292" description="Triosephosphate isomerase">
    <location>
        <begin position="1"/>
        <end position="252"/>
    </location>
</feature>
<feature type="active site" description="Electrophile" evidence="1">
    <location>
        <position position="96"/>
    </location>
</feature>
<feature type="active site" description="Proton acceptor" evidence="1">
    <location>
        <position position="168"/>
    </location>
</feature>
<feature type="binding site" evidence="1">
    <location>
        <begin position="10"/>
        <end position="12"/>
    </location>
    <ligand>
        <name>substrate</name>
    </ligand>
</feature>
<feature type="binding site" evidence="1">
    <location>
        <position position="174"/>
    </location>
    <ligand>
        <name>substrate</name>
    </ligand>
</feature>
<feature type="binding site" evidence="1">
    <location>
        <position position="214"/>
    </location>
    <ligand>
        <name>substrate</name>
    </ligand>
</feature>
<feature type="binding site" evidence="1">
    <location>
        <begin position="235"/>
        <end position="236"/>
    </location>
    <ligand>
        <name>substrate</name>
    </ligand>
</feature>
<dbReference type="EC" id="5.3.1.1" evidence="1"/>
<dbReference type="EMBL" id="AL766847">
    <property type="protein sequence ID" value="CAD46427.1"/>
    <property type="molecule type" value="Genomic_DNA"/>
</dbReference>
<dbReference type="RefSeq" id="WP_000087883.1">
    <property type="nucleotide sequence ID" value="NC_004368.1"/>
</dbReference>
<dbReference type="SMR" id="Q8E644"/>
<dbReference type="GeneID" id="66885715"/>
<dbReference type="KEGG" id="san:gbs0783"/>
<dbReference type="eggNOG" id="COG0149">
    <property type="taxonomic scope" value="Bacteria"/>
</dbReference>
<dbReference type="HOGENOM" id="CLU_024251_2_3_9"/>
<dbReference type="UniPathway" id="UPA00109">
    <property type="reaction ID" value="UER00189"/>
</dbReference>
<dbReference type="UniPathway" id="UPA00138"/>
<dbReference type="Proteomes" id="UP000000823">
    <property type="component" value="Chromosome"/>
</dbReference>
<dbReference type="GO" id="GO:0005829">
    <property type="term" value="C:cytosol"/>
    <property type="evidence" value="ECO:0007669"/>
    <property type="project" value="TreeGrafter"/>
</dbReference>
<dbReference type="GO" id="GO:0004807">
    <property type="term" value="F:triose-phosphate isomerase activity"/>
    <property type="evidence" value="ECO:0007669"/>
    <property type="project" value="UniProtKB-UniRule"/>
</dbReference>
<dbReference type="GO" id="GO:0006094">
    <property type="term" value="P:gluconeogenesis"/>
    <property type="evidence" value="ECO:0007669"/>
    <property type="project" value="UniProtKB-UniRule"/>
</dbReference>
<dbReference type="GO" id="GO:0046166">
    <property type="term" value="P:glyceraldehyde-3-phosphate biosynthetic process"/>
    <property type="evidence" value="ECO:0007669"/>
    <property type="project" value="TreeGrafter"/>
</dbReference>
<dbReference type="GO" id="GO:0019563">
    <property type="term" value="P:glycerol catabolic process"/>
    <property type="evidence" value="ECO:0007669"/>
    <property type="project" value="TreeGrafter"/>
</dbReference>
<dbReference type="GO" id="GO:0006096">
    <property type="term" value="P:glycolytic process"/>
    <property type="evidence" value="ECO:0007669"/>
    <property type="project" value="UniProtKB-UniRule"/>
</dbReference>
<dbReference type="CDD" id="cd00311">
    <property type="entry name" value="TIM"/>
    <property type="match status" value="1"/>
</dbReference>
<dbReference type="FunFam" id="3.20.20.70:FF:000016">
    <property type="entry name" value="Triosephosphate isomerase"/>
    <property type="match status" value="1"/>
</dbReference>
<dbReference type="Gene3D" id="3.20.20.70">
    <property type="entry name" value="Aldolase class I"/>
    <property type="match status" value="1"/>
</dbReference>
<dbReference type="HAMAP" id="MF_00147_B">
    <property type="entry name" value="TIM_B"/>
    <property type="match status" value="1"/>
</dbReference>
<dbReference type="InterPro" id="IPR013785">
    <property type="entry name" value="Aldolase_TIM"/>
</dbReference>
<dbReference type="InterPro" id="IPR035990">
    <property type="entry name" value="TIM_sf"/>
</dbReference>
<dbReference type="InterPro" id="IPR022896">
    <property type="entry name" value="TrioseP_Isoase_bac/euk"/>
</dbReference>
<dbReference type="InterPro" id="IPR000652">
    <property type="entry name" value="Triosephosphate_isomerase"/>
</dbReference>
<dbReference type="InterPro" id="IPR020861">
    <property type="entry name" value="Triosephosphate_isomerase_AS"/>
</dbReference>
<dbReference type="NCBIfam" id="TIGR00419">
    <property type="entry name" value="tim"/>
    <property type="match status" value="1"/>
</dbReference>
<dbReference type="PANTHER" id="PTHR21139">
    <property type="entry name" value="TRIOSEPHOSPHATE ISOMERASE"/>
    <property type="match status" value="1"/>
</dbReference>
<dbReference type="PANTHER" id="PTHR21139:SF42">
    <property type="entry name" value="TRIOSEPHOSPHATE ISOMERASE"/>
    <property type="match status" value="1"/>
</dbReference>
<dbReference type="Pfam" id="PF00121">
    <property type="entry name" value="TIM"/>
    <property type="match status" value="1"/>
</dbReference>
<dbReference type="SUPFAM" id="SSF51351">
    <property type="entry name" value="Triosephosphate isomerase (TIM)"/>
    <property type="match status" value="1"/>
</dbReference>
<dbReference type="PROSITE" id="PS00171">
    <property type="entry name" value="TIM_1"/>
    <property type="match status" value="1"/>
</dbReference>
<dbReference type="PROSITE" id="PS51440">
    <property type="entry name" value="TIM_2"/>
    <property type="match status" value="1"/>
</dbReference>
<gene>
    <name evidence="1" type="primary">tpiA</name>
    <name type="ordered locus">gbs0783</name>
</gene>
<keyword id="KW-0963">Cytoplasm</keyword>
<keyword id="KW-0312">Gluconeogenesis</keyword>
<keyword id="KW-0324">Glycolysis</keyword>
<keyword id="KW-0413">Isomerase</keyword>
<comment type="function">
    <text evidence="1">Involved in the gluconeogenesis. Catalyzes stereospecifically the conversion of dihydroxyacetone phosphate (DHAP) to D-glyceraldehyde-3-phosphate (G3P).</text>
</comment>
<comment type="catalytic activity">
    <reaction evidence="1">
        <text>D-glyceraldehyde 3-phosphate = dihydroxyacetone phosphate</text>
        <dbReference type="Rhea" id="RHEA:18585"/>
        <dbReference type="ChEBI" id="CHEBI:57642"/>
        <dbReference type="ChEBI" id="CHEBI:59776"/>
        <dbReference type="EC" id="5.3.1.1"/>
    </reaction>
</comment>
<comment type="pathway">
    <text evidence="1">Carbohydrate biosynthesis; gluconeogenesis.</text>
</comment>
<comment type="pathway">
    <text evidence="1">Carbohydrate degradation; glycolysis; D-glyceraldehyde 3-phosphate from glycerone phosphate: step 1/1.</text>
</comment>
<comment type="subunit">
    <text evidence="1">Homodimer.</text>
</comment>
<comment type="subcellular location">
    <subcellularLocation>
        <location evidence="1">Cytoplasm</location>
    </subcellularLocation>
</comment>
<comment type="similarity">
    <text evidence="1">Belongs to the triosephosphate isomerase family.</text>
</comment>
<protein>
    <recommendedName>
        <fullName evidence="1">Triosephosphate isomerase</fullName>
        <shortName evidence="1">TIM</shortName>
        <shortName evidence="1">TPI</shortName>
        <ecNumber evidence="1">5.3.1.1</ecNumber>
    </recommendedName>
    <alternativeName>
        <fullName evidence="1">Triose-phosphate isomerase</fullName>
    </alternativeName>
</protein>
<proteinExistence type="inferred from homology"/>
<evidence type="ECO:0000255" key="1">
    <source>
        <dbReference type="HAMAP-Rule" id="MF_00147"/>
    </source>
</evidence>
<name>TPIS_STRA3</name>
<sequence>MSRKPFIAGNWKMNKNPEEAKAFIEAVASKLPSSELVEAGIAAPALTLSTVLEAAKGSELKIAAQNSYFENSGAFTGENSPKVLAEMGTDYVVIGHSERRDYFHETDQDINKKAKAIFANGLTPIICCGESLETYEAGKAVEFVGAQVSAALAGLSEEQVSSLVIAYEPIWAIGTGKSATQDDAQNMCKAVRDVVAADFGQAVADKVRVQYGGSVKPENVAEYMACPDVDGALVGGASLEAESFLALLDFVK</sequence>
<organism>
    <name type="scientific">Streptococcus agalactiae serotype III (strain NEM316)</name>
    <dbReference type="NCBI Taxonomy" id="211110"/>
    <lineage>
        <taxon>Bacteria</taxon>
        <taxon>Bacillati</taxon>
        <taxon>Bacillota</taxon>
        <taxon>Bacilli</taxon>
        <taxon>Lactobacillales</taxon>
        <taxon>Streptococcaceae</taxon>
        <taxon>Streptococcus</taxon>
    </lineage>
</organism>